<evidence type="ECO:0000255" key="1">
    <source>
        <dbReference type="HAMAP-Rule" id="MF_01343"/>
    </source>
</evidence>
<evidence type="ECO:0000305" key="2"/>
<gene>
    <name evidence="1" type="primary">rpsO</name>
    <name type="ordered locus">stu0154</name>
</gene>
<proteinExistence type="inferred from homology"/>
<protein>
    <recommendedName>
        <fullName evidence="1">Small ribosomal subunit protein uS15</fullName>
    </recommendedName>
    <alternativeName>
        <fullName evidence="2">30S ribosomal protein S15</fullName>
    </alternativeName>
</protein>
<comment type="function">
    <text evidence="1">One of the primary rRNA binding proteins, it binds directly to 16S rRNA where it helps nucleate assembly of the platform of the 30S subunit by binding and bridging several RNA helices of the 16S rRNA.</text>
</comment>
<comment type="function">
    <text evidence="1">Forms an intersubunit bridge (bridge B4) with the 23S rRNA of the 50S subunit in the ribosome.</text>
</comment>
<comment type="subunit">
    <text evidence="1">Part of the 30S ribosomal subunit. Forms a bridge to the 50S subunit in the 70S ribosome, contacting the 23S rRNA.</text>
</comment>
<comment type="similarity">
    <text evidence="1">Belongs to the universal ribosomal protein uS15 family.</text>
</comment>
<dbReference type="EMBL" id="CP000023">
    <property type="protein sequence ID" value="AAV59879.1"/>
    <property type="molecule type" value="Genomic_DNA"/>
</dbReference>
<dbReference type="RefSeq" id="WP_002949247.1">
    <property type="nucleotide sequence ID" value="NC_006448.1"/>
</dbReference>
<dbReference type="SMR" id="Q5M6A7"/>
<dbReference type="STRING" id="264199.stu0154"/>
<dbReference type="GeneID" id="66898098"/>
<dbReference type="KEGG" id="stl:stu0154"/>
<dbReference type="eggNOG" id="COG0184">
    <property type="taxonomic scope" value="Bacteria"/>
</dbReference>
<dbReference type="HOGENOM" id="CLU_148518_0_0_9"/>
<dbReference type="Proteomes" id="UP000001170">
    <property type="component" value="Chromosome"/>
</dbReference>
<dbReference type="GO" id="GO:0022627">
    <property type="term" value="C:cytosolic small ribosomal subunit"/>
    <property type="evidence" value="ECO:0007669"/>
    <property type="project" value="TreeGrafter"/>
</dbReference>
<dbReference type="GO" id="GO:0019843">
    <property type="term" value="F:rRNA binding"/>
    <property type="evidence" value="ECO:0007669"/>
    <property type="project" value="UniProtKB-UniRule"/>
</dbReference>
<dbReference type="GO" id="GO:0003735">
    <property type="term" value="F:structural constituent of ribosome"/>
    <property type="evidence" value="ECO:0007669"/>
    <property type="project" value="InterPro"/>
</dbReference>
<dbReference type="GO" id="GO:0006412">
    <property type="term" value="P:translation"/>
    <property type="evidence" value="ECO:0007669"/>
    <property type="project" value="UniProtKB-UniRule"/>
</dbReference>
<dbReference type="CDD" id="cd00353">
    <property type="entry name" value="Ribosomal_S15p_S13e"/>
    <property type="match status" value="1"/>
</dbReference>
<dbReference type="FunFam" id="1.10.287.10:FF:000002">
    <property type="entry name" value="30S ribosomal protein S15"/>
    <property type="match status" value="1"/>
</dbReference>
<dbReference type="Gene3D" id="6.10.250.3130">
    <property type="match status" value="1"/>
</dbReference>
<dbReference type="Gene3D" id="1.10.287.10">
    <property type="entry name" value="S15/NS1, RNA-binding"/>
    <property type="match status" value="1"/>
</dbReference>
<dbReference type="HAMAP" id="MF_01343_B">
    <property type="entry name" value="Ribosomal_uS15_B"/>
    <property type="match status" value="1"/>
</dbReference>
<dbReference type="InterPro" id="IPR000589">
    <property type="entry name" value="Ribosomal_uS15"/>
</dbReference>
<dbReference type="InterPro" id="IPR005290">
    <property type="entry name" value="Ribosomal_uS15_bac-type"/>
</dbReference>
<dbReference type="InterPro" id="IPR009068">
    <property type="entry name" value="uS15_NS1_RNA-bd_sf"/>
</dbReference>
<dbReference type="NCBIfam" id="TIGR00952">
    <property type="entry name" value="S15_bact"/>
    <property type="match status" value="1"/>
</dbReference>
<dbReference type="PANTHER" id="PTHR23321">
    <property type="entry name" value="RIBOSOMAL PROTEIN S15, BACTERIAL AND ORGANELLAR"/>
    <property type="match status" value="1"/>
</dbReference>
<dbReference type="PANTHER" id="PTHR23321:SF26">
    <property type="entry name" value="SMALL RIBOSOMAL SUBUNIT PROTEIN US15M"/>
    <property type="match status" value="1"/>
</dbReference>
<dbReference type="Pfam" id="PF00312">
    <property type="entry name" value="Ribosomal_S15"/>
    <property type="match status" value="1"/>
</dbReference>
<dbReference type="SMART" id="SM01387">
    <property type="entry name" value="Ribosomal_S15"/>
    <property type="match status" value="1"/>
</dbReference>
<dbReference type="SUPFAM" id="SSF47060">
    <property type="entry name" value="S15/NS1 RNA-binding domain"/>
    <property type="match status" value="1"/>
</dbReference>
<dbReference type="PROSITE" id="PS00362">
    <property type="entry name" value="RIBOSOMAL_S15"/>
    <property type="match status" value="1"/>
</dbReference>
<organism>
    <name type="scientific">Streptococcus thermophilus (strain ATCC BAA-250 / LMG 18311)</name>
    <dbReference type="NCBI Taxonomy" id="264199"/>
    <lineage>
        <taxon>Bacteria</taxon>
        <taxon>Bacillati</taxon>
        <taxon>Bacillota</taxon>
        <taxon>Bacilli</taxon>
        <taxon>Lactobacillales</taxon>
        <taxon>Streptococcaceae</taxon>
        <taxon>Streptococcus</taxon>
    </lineage>
</organism>
<name>RS15_STRT2</name>
<keyword id="KW-1185">Reference proteome</keyword>
<keyword id="KW-0687">Ribonucleoprotein</keyword>
<keyword id="KW-0689">Ribosomal protein</keyword>
<keyword id="KW-0694">RNA-binding</keyword>
<keyword id="KW-0699">rRNA-binding</keyword>
<accession>Q5M6A7</accession>
<reference key="1">
    <citation type="journal article" date="2004" name="Nat. Biotechnol.">
        <title>Complete sequence and comparative genome analysis of the dairy bacterium Streptococcus thermophilus.</title>
        <authorList>
            <person name="Bolotin A."/>
            <person name="Quinquis B."/>
            <person name="Renault P."/>
            <person name="Sorokin A."/>
            <person name="Ehrlich S.D."/>
            <person name="Kulakauskas S."/>
            <person name="Lapidus A."/>
            <person name="Goltsman E."/>
            <person name="Mazur M."/>
            <person name="Pusch G.D."/>
            <person name="Fonstein M."/>
            <person name="Overbeek R."/>
            <person name="Kyprides N."/>
            <person name="Purnelle B."/>
            <person name="Prozzi D."/>
            <person name="Ngui K."/>
            <person name="Masuy D."/>
            <person name="Hancy F."/>
            <person name="Burteau S."/>
            <person name="Boutry M."/>
            <person name="Delcour J."/>
            <person name="Goffeau A."/>
            <person name="Hols P."/>
        </authorList>
    </citation>
    <scope>NUCLEOTIDE SEQUENCE [LARGE SCALE GENOMIC DNA]</scope>
    <source>
        <strain>ATCC BAA-250 / LMG 18311</strain>
    </source>
</reference>
<feature type="chain" id="PRO_0000115560" description="Small ribosomal subunit protein uS15">
    <location>
        <begin position="1"/>
        <end position="89"/>
    </location>
</feature>
<sequence>MAISKEKKNEIIAQYARHEGDTGSVEVQVAVLTWEINHLNDHIKQHKKDHATYRGLMKKIGHRRNLLAYLRRKDVNRYRELISSLGLRR</sequence>